<feature type="chain" id="PRO_0000212294" description="Adapter protein MecA">
    <location>
        <begin position="1"/>
        <end position="253"/>
    </location>
</feature>
<reference key="1">
    <citation type="journal article" date="2002" name="Proc. Natl. Acad. Sci. U.S.A.">
        <title>Genome sequence and comparative microarray analysis of serotype M18 group A Streptococcus strains associated with acute rheumatic fever outbreaks.</title>
        <authorList>
            <person name="Smoot J.C."/>
            <person name="Barbian K.D."/>
            <person name="Van Gompel J.J."/>
            <person name="Smoot L.M."/>
            <person name="Chaussee M.S."/>
            <person name="Sylva G.L."/>
            <person name="Sturdevant D.E."/>
            <person name="Ricklefs S.M."/>
            <person name="Porcella S.F."/>
            <person name="Parkins L.D."/>
            <person name="Beres S.B."/>
            <person name="Campbell D.S."/>
            <person name="Smith T.M."/>
            <person name="Zhang Q."/>
            <person name="Kapur V."/>
            <person name="Daly J.A."/>
            <person name="Veasy L.G."/>
            <person name="Musser J.M."/>
        </authorList>
    </citation>
    <scope>NUCLEOTIDE SEQUENCE [LARGE SCALE GENOMIC DNA]</scope>
    <source>
        <strain>MGAS8232</strain>
    </source>
</reference>
<comment type="function">
    <text evidence="1">Enables the recognition and targeting of unfolded and aggregated proteins to the ClpC protease or to other proteins involved in proteolysis.</text>
</comment>
<comment type="subunit">
    <text evidence="1">Homodimer.</text>
</comment>
<comment type="domain">
    <text>The N-terminal domain probably binds unfolded/aggregated proteins; the C-terminal domain interacts with ClpC.</text>
</comment>
<comment type="similarity">
    <text evidence="1">Belongs to the MecA family.</text>
</comment>
<dbReference type="EMBL" id="AE009949">
    <property type="protein sequence ID" value="AAL97047.1"/>
    <property type="molecule type" value="Genomic_DNA"/>
</dbReference>
<dbReference type="RefSeq" id="WP_002986029.1">
    <property type="nucleotide sequence ID" value="NC_003485.1"/>
</dbReference>
<dbReference type="SMR" id="P60188"/>
<dbReference type="GeneID" id="69900206"/>
<dbReference type="KEGG" id="spm:spyM18_0269"/>
<dbReference type="HOGENOM" id="CLU_071496_1_0_9"/>
<dbReference type="GO" id="GO:0030674">
    <property type="term" value="F:protein-macromolecule adaptor activity"/>
    <property type="evidence" value="ECO:0007669"/>
    <property type="project" value="UniProtKB-UniRule"/>
</dbReference>
<dbReference type="Gene3D" id="3.30.70.1950">
    <property type="match status" value="1"/>
</dbReference>
<dbReference type="HAMAP" id="MF_01124">
    <property type="entry name" value="MecA"/>
    <property type="match status" value="1"/>
</dbReference>
<dbReference type="InterPro" id="IPR038471">
    <property type="entry name" value="MecA_C_sf"/>
</dbReference>
<dbReference type="InterPro" id="IPR008681">
    <property type="entry name" value="Neg-reg_MecA"/>
</dbReference>
<dbReference type="NCBIfam" id="NF002643">
    <property type="entry name" value="PRK02315.1-4"/>
    <property type="match status" value="1"/>
</dbReference>
<dbReference type="PANTHER" id="PTHR39161">
    <property type="entry name" value="ADAPTER PROTEIN MECA"/>
    <property type="match status" value="1"/>
</dbReference>
<dbReference type="PANTHER" id="PTHR39161:SF1">
    <property type="entry name" value="ADAPTER PROTEIN MECA 1"/>
    <property type="match status" value="1"/>
</dbReference>
<dbReference type="Pfam" id="PF05389">
    <property type="entry name" value="MecA"/>
    <property type="match status" value="1"/>
</dbReference>
<dbReference type="PIRSF" id="PIRSF029008">
    <property type="entry name" value="MecA"/>
    <property type="match status" value="1"/>
</dbReference>
<protein>
    <recommendedName>
        <fullName evidence="1">Adapter protein MecA</fullName>
    </recommendedName>
</protein>
<name>MECA_STRP8</name>
<sequence>MEMKQISETTLKITISMDDLEERGMELKDFLIPQEKTEEFFYSVMDELDLPDNFKDSGMLSFRVTPRKDRLDVFVTKSEINKDINLEDLAEFGDMSQMTPEDFFKSLEQSMREKGDVKAHEKLEKIEEIMEDVVEATLANQSEAADPSTNHESEPLDYVHYVLDFSTITEAVAFAKTIDFSIEASELYKGSNCYHMTILLDVQQQPSYFANVMYARLIEHANPGSKTRAYLQEHGLQLMLDGAVEQLQKIELG</sequence>
<accession>P60188</accession>
<accession>Q9A1G7</accession>
<evidence type="ECO:0000255" key="1">
    <source>
        <dbReference type="HAMAP-Rule" id="MF_01124"/>
    </source>
</evidence>
<organism>
    <name type="scientific">Streptococcus pyogenes serotype M18 (strain MGAS8232)</name>
    <dbReference type="NCBI Taxonomy" id="186103"/>
    <lineage>
        <taxon>Bacteria</taxon>
        <taxon>Bacillati</taxon>
        <taxon>Bacillota</taxon>
        <taxon>Bacilli</taxon>
        <taxon>Lactobacillales</taxon>
        <taxon>Streptococcaceae</taxon>
        <taxon>Streptococcus</taxon>
    </lineage>
</organism>
<gene>
    <name evidence="1" type="primary">mecA</name>
    <name type="ordered locus">spyM18_0269</name>
</gene>
<proteinExistence type="inferred from homology"/>